<dbReference type="EC" id="2.7.4.3" evidence="1 4"/>
<dbReference type="EMBL" id="AB009996">
    <property type="protein sequence ID" value="BAA87877.1"/>
    <property type="molecule type" value="mRNA"/>
</dbReference>
<dbReference type="EMBL" id="AE013599">
    <property type="protein sequence ID" value="AAF47139.2"/>
    <property type="molecule type" value="Genomic_DNA"/>
</dbReference>
<dbReference type="EMBL" id="AY069848">
    <property type="protein sequence ID" value="AAL39993.1"/>
    <property type="molecule type" value="mRNA"/>
</dbReference>
<dbReference type="RefSeq" id="NP_523836.2">
    <property type="nucleotide sequence ID" value="NM_079112.4"/>
</dbReference>
<dbReference type="SMR" id="Q9U915"/>
<dbReference type="BioGRID" id="63416">
    <property type="interactions" value="8"/>
</dbReference>
<dbReference type="FunCoup" id="Q9U915">
    <property type="interactions" value="1663"/>
</dbReference>
<dbReference type="IntAct" id="Q9U915">
    <property type="interactions" value="9"/>
</dbReference>
<dbReference type="STRING" id="7227.FBpp0072072"/>
<dbReference type="iPTMnet" id="Q9U915"/>
<dbReference type="PaxDb" id="7227-FBpp0072072"/>
<dbReference type="DNASU" id="37834"/>
<dbReference type="EnsemblMetazoa" id="FBtr0072163">
    <property type="protein sequence ID" value="FBpp0072072"/>
    <property type="gene ID" value="FBgn0283494"/>
</dbReference>
<dbReference type="GeneID" id="37834"/>
<dbReference type="KEGG" id="dme:Dmel_CG3140"/>
<dbReference type="UCSC" id="CG3140-RA">
    <property type="organism name" value="d. melanogaster"/>
</dbReference>
<dbReference type="AGR" id="FB:FBgn0283494"/>
<dbReference type="CTD" id="204"/>
<dbReference type="FlyBase" id="FBgn0283494">
    <property type="gene designation" value="Ak2"/>
</dbReference>
<dbReference type="VEuPathDB" id="VectorBase:FBgn0283494"/>
<dbReference type="eggNOG" id="KOG3078">
    <property type="taxonomic scope" value="Eukaryota"/>
</dbReference>
<dbReference type="GeneTree" id="ENSGT00940000154576"/>
<dbReference type="HOGENOM" id="CLU_032354_1_0_1"/>
<dbReference type="InParanoid" id="Q9U915"/>
<dbReference type="OMA" id="HYKVDAA"/>
<dbReference type="OrthoDB" id="439792at2759"/>
<dbReference type="PhylomeDB" id="Q9U915"/>
<dbReference type="BRENDA" id="2.7.4.3">
    <property type="organism ID" value="1994"/>
</dbReference>
<dbReference type="Reactome" id="R-DME-499943">
    <property type="pathway name" value="Interconversion of nucleotide di- and triphosphates"/>
</dbReference>
<dbReference type="BioGRID-ORCS" id="37834">
    <property type="hits" value="1 hit in 2 CRISPR screens"/>
</dbReference>
<dbReference type="GenomeRNAi" id="37834"/>
<dbReference type="PRO" id="PR:Q9U915"/>
<dbReference type="Proteomes" id="UP000000803">
    <property type="component" value="Chromosome 2R"/>
</dbReference>
<dbReference type="Bgee" id="FBgn0283494">
    <property type="expression patterns" value="Expressed in wing disc and 245 other cell types or tissues"/>
</dbReference>
<dbReference type="GO" id="GO:0005737">
    <property type="term" value="C:cytoplasm"/>
    <property type="evidence" value="ECO:0000318"/>
    <property type="project" value="GO_Central"/>
</dbReference>
<dbReference type="GO" id="GO:0005829">
    <property type="term" value="C:cytosol"/>
    <property type="evidence" value="ECO:0007669"/>
    <property type="project" value="UniProtKB-SubCell"/>
</dbReference>
<dbReference type="GO" id="GO:0005758">
    <property type="term" value="C:mitochondrial intermembrane space"/>
    <property type="evidence" value="ECO:0007669"/>
    <property type="project" value="UniProtKB-SubCell"/>
</dbReference>
<dbReference type="GO" id="GO:0005739">
    <property type="term" value="C:mitochondrion"/>
    <property type="evidence" value="ECO:0007005"/>
    <property type="project" value="FlyBase"/>
</dbReference>
<dbReference type="GO" id="GO:0004017">
    <property type="term" value="F:adenylate kinase activity"/>
    <property type="evidence" value="ECO:0000314"/>
    <property type="project" value="FlyBase"/>
</dbReference>
<dbReference type="GO" id="GO:0005524">
    <property type="term" value="F:ATP binding"/>
    <property type="evidence" value="ECO:0007669"/>
    <property type="project" value="UniProtKB-KW"/>
</dbReference>
<dbReference type="GO" id="GO:0006172">
    <property type="term" value="P:ADP biosynthetic process"/>
    <property type="evidence" value="ECO:0000318"/>
    <property type="project" value="GO_Central"/>
</dbReference>
<dbReference type="GO" id="GO:0046033">
    <property type="term" value="P:AMP metabolic process"/>
    <property type="evidence" value="ECO:0007669"/>
    <property type="project" value="UniProtKB-UniRule"/>
</dbReference>
<dbReference type="GO" id="GO:0046034">
    <property type="term" value="P:ATP metabolic process"/>
    <property type="evidence" value="ECO:0007669"/>
    <property type="project" value="UniProtKB-UniRule"/>
</dbReference>
<dbReference type="CDD" id="cd01428">
    <property type="entry name" value="ADK"/>
    <property type="match status" value="1"/>
</dbReference>
<dbReference type="FunFam" id="3.40.50.300:FF:000106">
    <property type="entry name" value="Adenylate kinase mitochondrial"/>
    <property type="match status" value="1"/>
</dbReference>
<dbReference type="Gene3D" id="3.40.50.300">
    <property type="entry name" value="P-loop containing nucleotide triphosphate hydrolases"/>
    <property type="match status" value="1"/>
</dbReference>
<dbReference type="HAMAP" id="MF_00235">
    <property type="entry name" value="Adenylate_kinase_Adk"/>
    <property type="match status" value="1"/>
</dbReference>
<dbReference type="HAMAP" id="MF_03168">
    <property type="entry name" value="Adenylate_kinase_AK2"/>
    <property type="match status" value="1"/>
</dbReference>
<dbReference type="InterPro" id="IPR006259">
    <property type="entry name" value="Adenyl_kin_sub"/>
</dbReference>
<dbReference type="InterPro" id="IPR000850">
    <property type="entry name" value="Adenylat/UMP-CMP_kin"/>
</dbReference>
<dbReference type="InterPro" id="IPR033690">
    <property type="entry name" value="Adenylat_kinase_CS"/>
</dbReference>
<dbReference type="InterPro" id="IPR007862">
    <property type="entry name" value="Adenylate_kinase_lid-dom"/>
</dbReference>
<dbReference type="InterPro" id="IPR028587">
    <property type="entry name" value="AK2"/>
</dbReference>
<dbReference type="InterPro" id="IPR027417">
    <property type="entry name" value="P-loop_NTPase"/>
</dbReference>
<dbReference type="NCBIfam" id="TIGR01351">
    <property type="entry name" value="adk"/>
    <property type="match status" value="1"/>
</dbReference>
<dbReference type="NCBIfam" id="NF001380">
    <property type="entry name" value="PRK00279.1-2"/>
    <property type="match status" value="1"/>
</dbReference>
<dbReference type="NCBIfam" id="NF001381">
    <property type="entry name" value="PRK00279.1-3"/>
    <property type="match status" value="1"/>
</dbReference>
<dbReference type="NCBIfam" id="NF011100">
    <property type="entry name" value="PRK14527.1"/>
    <property type="match status" value="1"/>
</dbReference>
<dbReference type="PANTHER" id="PTHR23359">
    <property type="entry name" value="NUCLEOTIDE KINASE"/>
    <property type="match status" value="1"/>
</dbReference>
<dbReference type="Pfam" id="PF00406">
    <property type="entry name" value="ADK"/>
    <property type="match status" value="1"/>
</dbReference>
<dbReference type="Pfam" id="PF05191">
    <property type="entry name" value="ADK_lid"/>
    <property type="match status" value="1"/>
</dbReference>
<dbReference type="PRINTS" id="PR00094">
    <property type="entry name" value="ADENYLTKNASE"/>
</dbReference>
<dbReference type="SUPFAM" id="SSF52540">
    <property type="entry name" value="P-loop containing nucleoside triphosphate hydrolases"/>
    <property type="match status" value="1"/>
</dbReference>
<dbReference type="PROSITE" id="PS00113">
    <property type="entry name" value="ADENYLATE_KINASE"/>
    <property type="match status" value="1"/>
</dbReference>
<keyword id="KW-0067">ATP-binding</keyword>
<keyword id="KW-0963">Cytoplasm</keyword>
<keyword id="KW-0418">Kinase</keyword>
<keyword id="KW-0496">Mitochondrion</keyword>
<keyword id="KW-0547">Nucleotide-binding</keyword>
<keyword id="KW-0597">Phosphoprotein</keyword>
<keyword id="KW-1185">Reference proteome</keyword>
<keyword id="KW-0808">Transferase</keyword>
<comment type="function">
    <text evidence="1 4">Catalyzes the reversible transfer of the terminal phosphate group between ATP and AMP (By similarity) (PubMed:19416704). Plays an important role in cellular energy homeostasis and in adenine nucleotide metabolism. Adenylate kinase activity is critical for regulation of the phosphate utilization and the AMP de novo biosynthesis pathways (By similarity). Essential for viability (PubMed:19416704).</text>
</comment>
<comment type="catalytic activity">
    <reaction evidence="1 4">
        <text>AMP + ATP = 2 ADP</text>
        <dbReference type="Rhea" id="RHEA:12973"/>
        <dbReference type="ChEBI" id="CHEBI:30616"/>
        <dbReference type="ChEBI" id="CHEBI:456215"/>
        <dbReference type="ChEBI" id="CHEBI:456216"/>
        <dbReference type="EC" id="2.7.4.3"/>
    </reaction>
</comment>
<comment type="subunit">
    <text evidence="1">Monomer.</text>
</comment>
<comment type="subcellular location">
    <subcellularLocation>
        <location evidence="1">Cytoplasm</location>
        <location evidence="1">Cytosol</location>
    </subcellularLocation>
    <subcellularLocation>
        <location evidence="1">Mitochondrion intermembrane space</location>
    </subcellularLocation>
    <text evidence="1">Predominantly mitochondrial.</text>
</comment>
<comment type="tissue specificity">
    <text evidence="4">High expression level in the head suggesting a possible neuronal function.</text>
</comment>
<comment type="developmental stage">
    <text evidence="2 4">Detected throughout development (PubMed:10786623). Expression decreases during larval stage and peaks in adults (PubMed:19416704).</text>
</comment>
<comment type="domain">
    <text evidence="1">Consists of three domains, a large central CORE domain and two small peripheral domains, NMPbind and LID, which undergo movements during catalysis. The LID domain closes over the site of phosphoryl transfer upon ATP binding. Assembling and dissambling the active center during each catalytic cycle provides an effective means to prevent ATP hydrolysis.</text>
</comment>
<comment type="disruption phenotype">
    <text evidence="4 5">Larval lethal; larvae stop growing and die before the 3rd instar (PubMed:19416704). Larvae seem to survive for as long as there is a maternal contribution of adenylate kinase 2 activity (PubMed:19416704). Ubiquitous or tissue specific RNAi-mediated knockdown in dermal, muscle, gut or nervous tissue is larval lethal (PubMed:24705759).</text>
</comment>
<comment type="similarity">
    <text evidence="1">Belongs to the adenylate kinase family. AK2 subfamily.</text>
</comment>
<gene>
    <name evidence="1 7" type="primary">Ak2</name>
    <name evidence="7" type="synonym">Adk2</name>
    <name evidence="6 7" type="synonym">Dak2</name>
    <name evidence="7" type="ORF">CG3140</name>
</gene>
<organism evidence="8">
    <name type="scientific">Drosophila melanogaster</name>
    <name type="common">Fruit fly</name>
    <dbReference type="NCBI Taxonomy" id="7227"/>
    <lineage>
        <taxon>Eukaryota</taxon>
        <taxon>Metazoa</taxon>
        <taxon>Ecdysozoa</taxon>
        <taxon>Arthropoda</taxon>
        <taxon>Hexapoda</taxon>
        <taxon>Insecta</taxon>
        <taxon>Pterygota</taxon>
        <taxon>Neoptera</taxon>
        <taxon>Endopterygota</taxon>
        <taxon>Diptera</taxon>
        <taxon>Brachycera</taxon>
        <taxon>Muscomorpha</taxon>
        <taxon>Ephydroidea</taxon>
        <taxon>Drosophilidae</taxon>
        <taxon>Drosophila</taxon>
        <taxon>Sophophora</taxon>
    </lineage>
</organism>
<evidence type="ECO:0000255" key="1">
    <source>
        <dbReference type="HAMAP-Rule" id="MF_03168"/>
    </source>
</evidence>
<evidence type="ECO:0000269" key="2">
    <source>
    </source>
</evidence>
<evidence type="ECO:0000269" key="3">
    <source>
    </source>
</evidence>
<evidence type="ECO:0000269" key="4">
    <source>
    </source>
</evidence>
<evidence type="ECO:0000269" key="5">
    <source>
    </source>
</evidence>
<evidence type="ECO:0000303" key="6">
    <source>
    </source>
</evidence>
<evidence type="ECO:0000312" key="7">
    <source>
        <dbReference type="FlyBase" id="FBgn0283494"/>
    </source>
</evidence>
<evidence type="ECO:0000312" key="8">
    <source>
        <dbReference type="Proteomes" id="UP000000803"/>
    </source>
</evidence>
<accession>Q9U915</accession>
<accession>Q9W1D0</accession>
<protein>
    <recommendedName>
        <fullName evidence="1 7">Adenylate kinase 2</fullName>
        <ecNumber evidence="1 4">2.7.4.3</ecNumber>
    </recommendedName>
    <alternativeName>
        <fullName evidence="1">ATP-AMP transphosphorylase</fullName>
    </alternativeName>
    <alternativeName>
        <fullName evidence="1">ATP:AMP phosphotransferase</fullName>
    </alternativeName>
    <alternativeName>
        <fullName evidence="1">Adenylate kinase cytosolic and mitochondrial</fullName>
    </alternativeName>
    <alternativeName>
        <fullName evidence="1">Adenylate monophosphate kinase</fullName>
    </alternativeName>
</protein>
<feature type="chain" id="PRO_0000365706" description="Adenylate kinase 2">
    <location>
        <begin position="1"/>
        <end position="240"/>
    </location>
</feature>
<feature type="region of interest" description="NMP" evidence="1">
    <location>
        <begin position="48"/>
        <end position="77"/>
    </location>
</feature>
<feature type="region of interest" description="LID" evidence="1">
    <location>
        <begin position="144"/>
        <end position="181"/>
    </location>
</feature>
<feature type="binding site" evidence="1">
    <location>
        <begin position="28"/>
        <end position="33"/>
    </location>
    <ligand>
        <name>ATP</name>
        <dbReference type="ChEBI" id="CHEBI:30616"/>
    </ligand>
</feature>
<feature type="binding site" evidence="1">
    <location>
        <position position="49"/>
    </location>
    <ligand>
        <name>AMP</name>
        <dbReference type="ChEBI" id="CHEBI:456215"/>
    </ligand>
</feature>
<feature type="binding site" evidence="1">
    <location>
        <position position="54"/>
    </location>
    <ligand>
        <name>AMP</name>
        <dbReference type="ChEBI" id="CHEBI:456215"/>
    </ligand>
</feature>
<feature type="binding site" evidence="1">
    <location>
        <begin position="75"/>
        <end position="77"/>
    </location>
    <ligand>
        <name>AMP</name>
        <dbReference type="ChEBI" id="CHEBI:456215"/>
    </ligand>
</feature>
<feature type="binding site" evidence="1">
    <location>
        <begin position="103"/>
        <end position="106"/>
    </location>
    <ligand>
        <name>AMP</name>
        <dbReference type="ChEBI" id="CHEBI:456215"/>
    </ligand>
</feature>
<feature type="binding site" evidence="1">
    <location>
        <position position="110"/>
    </location>
    <ligand>
        <name>AMP</name>
        <dbReference type="ChEBI" id="CHEBI:456215"/>
    </ligand>
</feature>
<feature type="binding site" evidence="1">
    <location>
        <position position="145"/>
    </location>
    <ligand>
        <name>ATP</name>
        <dbReference type="ChEBI" id="CHEBI:30616"/>
    </ligand>
</feature>
<feature type="binding site" evidence="1">
    <location>
        <begin position="154"/>
        <end position="155"/>
    </location>
    <ligand>
        <name>ATP</name>
        <dbReference type="ChEBI" id="CHEBI:30616"/>
    </ligand>
</feature>
<feature type="binding site" evidence="1">
    <location>
        <position position="178"/>
    </location>
    <ligand>
        <name>AMP</name>
        <dbReference type="ChEBI" id="CHEBI:456215"/>
    </ligand>
</feature>
<feature type="binding site" evidence="1">
    <location>
        <position position="189"/>
    </location>
    <ligand>
        <name>AMP</name>
        <dbReference type="ChEBI" id="CHEBI:456215"/>
    </ligand>
</feature>
<feature type="binding site" evidence="1">
    <location>
        <position position="217"/>
    </location>
    <ligand>
        <name>ATP</name>
        <dbReference type="ChEBI" id="CHEBI:30616"/>
    </ligand>
</feature>
<feature type="modified residue" description="Phosphoserine" evidence="3">
    <location>
        <position position="48"/>
    </location>
</feature>
<name>KAD2_DROME</name>
<sequence>MAPNAAVPVERYEPENIGINAILLGPPGSGKGTQAPLLKEKFCVCHLSTGDMLRAEISSGSKLGAELKKVMDAGKLVSDDLVVDMIDSNLDKPECKNGFLLDGFPRTVVQAEKLDTLLDKRKTNLDAVIEFAIDDSLLVRRITGRLIHQASGRSYHEEFAPPKKPMTDDVTGEPLIRRSDDNAEALKKRLEAYHKQTKPLVDYYGLRGLHFKVDAAKKSSDVFSTIDSIFQRKRPAQIQL</sequence>
<proteinExistence type="evidence at protein level"/>
<reference key="1">
    <citation type="journal article" date="2000" name="Biochim. Biophys. Acta">
        <title>cDNA cloning and chromosomal mapping of the gene encoding adenylate kinase 2 from Drosophila melanogaster.</title>
        <authorList>
            <person name="Noma T."/>
            <person name="Murakami R."/>
            <person name="Yamashiro Y."/>
            <person name="Fujisawa K."/>
            <person name="Inouye S."/>
            <person name="Nakazawa A."/>
        </authorList>
    </citation>
    <scope>NUCLEOTIDE SEQUENCE [MRNA]</scope>
    <scope>DEVELOPMENTAL STAGE</scope>
</reference>
<reference key="2">
    <citation type="journal article" date="2000" name="Science">
        <title>The genome sequence of Drosophila melanogaster.</title>
        <authorList>
            <person name="Adams M.D."/>
            <person name="Celniker S.E."/>
            <person name="Holt R.A."/>
            <person name="Evans C.A."/>
            <person name="Gocayne J.D."/>
            <person name="Amanatides P.G."/>
            <person name="Scherer S.E."/>
            <person name="Li P.W."/>
            <person name="Hoskins R.A."/>
            <person name="Galle R.F."/>
            <person name="George R.A."/>
            <person name="Lewis S.E."/>
            <person name="Richards S."/>
            <person name="Ashburner M."/>
            <person name="Henderson S.N."/>
            <person name="Sutton G.G."/>
            <person name="Wortman J.R."/>
            <person name="Yandell M.D."/>
            <person name="Zhang Q."/>
            <person name="Chen L.X."/>
            <person name="Brandon R.C."/>
            <person name="Rogers Y.-H.C."/>
            <person name="Blazej R.G."/>
            <person name="Champe M."/>
            <person name="Pfeiffer B.D."/>
            <person name="Wan K.H."/>
            <person name="Doyle C."/>
            <person name="Baxter E.G."/>
            <person name="Helt G."/>
            <person name="Nelson C.R."/>
            <person name="Miklos G.L.G."/>
            <person name="Abril J.F."/>
            <person name="Agbayani A."/>
            <person name="An H.-J."/>
            <person name="Andrews-Pfannkoch C."/>
            <person name="Baldwin D."/>
            <person name="Ballew R.M."/>
            <person name="Basu A."/>
            <person name="Baxendale J."/>
            <person name="Bayraktaroglu L."/>
            <person name="Beasley E.M."/>
            <person name="Beeson K.Y."/>
            <person name="Benos P.V."/>
            <person name="Berman B.P."/>
            <person name="Bhandari D."/>
            <person name="Bolshakov S."/>
            <person name="Borkova D."/>
            <person name="Botchan M.R."/>
            <person name="Bouck J."/>
            <person name="Brokstein P."/>
            <person name="Brottier P."/>
            <person name="Burtis K.C."/>
            <person name="Busam D.A."/>
            <person name="Butler H."/>
            <person name="Cadieu E."/>
            <person name="Center A."/>
            <person name="Chandra I."/>
            <person name="Cherry J.M."/>
            <person name="Cawley S."/>
            <person name="Dahlke C."/>
            <person name="Davenport L.B."/>
            <person name="Davies P."/>
            <person name="de Pablos B."/>
            <person name="Delcher A."/>
            <person name="Deng Z."/>
            <person name="Mays A.D."/>
            <person name="Dew I."/>
            <person name="Dietz S.M."/>
            <person name="Dodson K."/>
            <person name="Doup L.E."/>
            <person name="Downes M."/>
            <person name="Dugan-Rocha S."/>
            <person name="Dunkov B.C."/>
            <person name="Dunn P."/>
            <person name="Durbin K.J."/>
            <person name="Evangelista C.C."/>
            <person name="Ferraz C."/>
            <person name="Ferriera S."/>
            <person name="Fleischmann W."/>
            <person name="Fosler C."/>
            <person name="Gabrielian A.E."/>
            <person name="Garg N.S."/>
            <person name="Gelbart W.M."/>
            <person name="Glasser K."/>
            <person name="Glodek A."/>
            <person name="Gong F."/>
            <person name="Gorrell J.H."/>
            <person name="Gu Z."/>
            <person name="Guan P."/>
            <person name="Harris M."/>
            <person name="Harris N.L."/>
            <person name="Harvey D.A."/>
            <person name="Heiman T.J."/>
            <person name="Hernandez J.R."/>
            <person name="Houck J."/>
            <person name="Hostin D."/>
            <person name="Houston K.A."/>
            <person name="Howland T.J."/>
            <person name="Wei M.-H."/>
            <person name="Ibegwam C."/>
            <person name="Jalali M."/>
            <person name="Kalush F."/>
            <person name="Karpen G.H."/>
            <person name="Ke Z."/>
            <person name="Kennison J.A."/>
            <person name="Ketchum K.A."/>
            <person name="Kimmel B.E."/>
            <person name="Kodira C.D."/>
            <person name="Kraft C.L."/>
            <person name="Kravitz S."/>
            <person name="Kulp D."/>
            <person name="Lai Z."/>
            <person name="Lasko P."/>
            <person name="Lei Y."/>
            <person name="Levitsky A.A."/>
            <person name="Li J.H."/>
            <person name="Li Z."/>
            <person name="Liang Y."/>
            <person name="Lin X."/>
            <person name="Liu X."/>
            <person name="Mattei B."/>
            <person name="McIntosh T.C."/>
            <person name="McLeod M.P."/>
            <person name="McPherson D."/>
            <person name="Merkulov G."/>
            <person name="Milshina N.V."/>
            <person name="Mobarry C."/>
            <person name="Morris J."/>
            <person name="Moshrefi A."/>
            <person name="Mount S.M."/>
            <person name="Moy M."/>
            <person name="Murphy B."/>
            <person name="Murphy L."/>
            <person name="Muzny D.M."/>
            <person name="Nelson D.L."/>
            <person name="Nelson D.R."/>
            <person name="Nelson K.A."/>
            <person name="Nixon K."/>
            <person name="Nusskern D.R."/>
            <person name="Pacleb J.M."/>
            <person name="Palazzolo M."/>
            <person name="Pittman G.S."/>
            <person name="Pan S."/>
            <person name="Pollard J."/>
            <person name="Puri V."/>
            <person name="Reese M.G."/>
            <person name="Reinert K."/>
            <person name="Remington K."/>
            <person name="Saunders R.D.C."/>
            <person name="Scheeler F."/>
            <person name="Shen H."/>
            <person name="Shue B.C."/>
            <person name="Siden-Kiamos I."/>
            <person name="Simpson M."/>
            <person name="Skupski M.P."/>
            <person name="Smith T.J."/>
            <person name="Spier E."/>
            <person name="Spradling A.C."/>
            <person name="Stapleton M."/>
            <person name="Strong R."/>
            <person name="Sun E."/>
            <person name="Svirskas R."/>
            <person name="Tector C."/>
            <person name="Turner R."/>
            <person name="Venter E."/>
            <person name="Wang A.H."/>
            <person name="Wang X."/>
            <person name="Wang Z.-Y."/>
            <person name="Wassarman D.A."/>
            <person name="Weinstock G.M."/>
            <person name="Weissenbach J."/>
            <person name="Williams S.M."/>
            <person name="Woodage T."/>
            <person name="Worley K.C."/>
            <person name="Wu D."/>
            <person name="Yang S."/>
            <person name="Yao Q.A."/>
            <person name="Ye J."/>
            <person name="Yeh R.-F."/>
            <person name="Zaveri J.S."/>
            <person name="Zhan M."/>
            <person name="Zhang G."/>
            <person name="Zhao Q."/>
            <person name="Zheng L."/>
            <person name="Zheng X.H."/>
            <person name="Zhong F.N."/>
            <person name="Zhong W."/>
            <person name="Zhou X."/>
            <person name="Zhu S.C."/>
            <person name="Zhu X."/>
            <person name="Smith H.O."/>
            <person name="Gibbs R.A."/>
            <person name="Myers E.W."/>
            <person name="Rubin G.M."/>
            <person name="Venter J.C."/>
        </authorList>
    </citation>
    <scope>NUCLEOTIDE SEQUENCE [LARGE SCALE GENOMIC DNA]</scope>
    <source>
        <strain>Berkeley</strain>
    </source>
</reference>
<reference key="3">
    <citation type="journal article" date="2002" name="Genome Biol.">
        <title>Annotation of the Drosophila melanogaster euchromatic genome: a systematic review.</title>
        <authorList>
            <person name="Misra S."/>
            <person name="Crosby M.A."/>
            <person name="Mungall C.J."/>
            <person name="Matthews B.B."/>
            <person name="Campbell K.S."/>
            <person name="Hradecky P."/>
            <person name="Huang Y."/>
            <person name="Kaminker J.S."/>
            <person name="Millburn G.H."/>
            <person name="Prochnik S.E."/>
            <person name="Smith C.D."/>
            <person name="Tupy J.L."/>
            <person name="Whitfield E.J."/>
            <person name="Bayraktaroglu L."/>
            <person name="Berman B.P."/>
            <person name="Bettencourt B.R."/>
            <person name="Celniker S.E."/>
            <person name="de Grey A.D.N.J."/>
            <person name="Drysdale R.A."/>
            <person name="Harris N.L."/>
            <person name="Richter J."/>
            <person name="Russo S."/>
            <person name="Schroeder A.J."/>
            <person name="Shu S.Q."/>
            <person name="Stapleton M."/>
            <person name="Yamada C."/>
            <person name="Ashburner M."/>
            <person name="Gelbart W.M."/>
            <person name="Rubin G.M."/>
            <person name="Lewis S.E."/>
        </authorList>
    </citation>
    <scope>GENOME REANNOTATION</scope>
    <source>
        <strain>Berkeley</strain>
    </source>
</reference>
<reference key="4">
    <citation type="submission" date="2003-01" db="EMBL/GenBank/DDBJ databases">
        <authorList>
            <person name="Stapleton M."/>
            <person name="Brokstein P."/>
            <person name="Hong L."/>
            <person name="Agbayani A."/>
            <person name="Carlson J.W."/>
            <person name="Champe M."/>
            <person name="Chavez C."/>
            <person name="Dorsett V."/>
            <person name="Dresnek D."/>
            <person name="Farfan D."/>
            <person name="Frise E."/>
            <person name="George R.A."/>
            <person name="Gonzalez M."/>
            <person name="Guarin H."/>
            <person name="Kronmiller B."/>
            <person name="Li P.W."/>
            <person name="Liao G."/>
            <person name="Miranda A."/>
            <person name="Mungall C.J."/>
            <person name="Nunoo J."/>
            <person name="Pacleb J.M."/>
            <person name="Paragas V."/>
            <person name="Park S."/>
            <person name="Patel S."/>
            <person name="Phouanenavong S."/>
            <person name="Wan K.H."/>
            <person name="Yu C."/>
            <person name="Lewis S.E."/>
            <person name="Rubin G.M."/>
            <person name="Celniker S.E."/>
        </authorList>
    </citation>
    <scope>NUCLEOTIDE SEQUENCE [LARGE SCALE MRNA]</scope>
    <source>
        <strain>Berkeley</strain>
        <tissue>Embryo</tissue>
    </source>
</reference>
<reference key="5">
    <citation type="journal article" date="2008" name="J. Proteome Res.">
        <title>Phosphoproteome analysis of Drosophila melanogaster embryos.</title>
        <authorList>
            <person name="Zhai B."/>
            <person name="Villen J."/>
            <person name="Beausoleil S.A."/>
            <person name="Mintseris J."/>
            <person name="Gygi S.P."/>
        </authorList>
    </citation>
    <scope>PHOSPHORYLATION [LARGE SCALE ANALYSIS] AT SER-48</scope>
    <scope>IDENTIFICATION BY MASS SPECTROMETRY</scope>
    <source>
        <tissue>Embryo</tissue>
    </source>
</reference>
<reference key="6">
    <citation type="journal article" date="2009" name="Comp. Biochem. Physiol.">
        <title>Adenylate kinase isozyme 2 is essential for growth and development of Drosophila melanogaster.</title>
        <authorList>
            <person name="Fujisawa K."/>
            <person name="Murakami R."/>
            <person name="Horiguchi T."/>
            <person name="Noma T."/>
        </authorList>
    </citation>
    <scope>FUNCTION</scope>
    <scope>CATALYTIC ACTIVITY</scope>
    <scope>TISSUE SPECIFICITY</scope>
    <scope>DEVELOPMENTAL STAGE</scope>
    <scope>DISRUPTION PHENOTYPE</scope>
</reference>
<reference key="7">
    <citation type="journal article" date="2014" name="J. Med. Invest.">
        <title>Adenylate kinase 2 deficiency limits survival and regulates various genes during larval stages of Drosophila melanogaster.</title>
        <authorList>
            <person name="Horiguchi T."/>
            <person name="Fuka M."/>
            <person name="Fujisawa K."/>
            <person name="Tanimura A."/>
            <person name="Miyoshi K."/>
            <person name="Murakami R."/>
            <person name="Noma T."/>
        </authorList>
    </citation>
    <scope>DISRUPTION PHENOTYPE</scope>
</reference>